<evidence type="ECO:0000250" key="1"/>
<evidence type="ECO:0000255" key="2"/>
<evidence type="ECO:0000255" key="3">
    <source>
        <dbReference type="PROSITE-ProRule" id="PRU00739"/>
    </source>
</evidence>
<evidence type="ECO:0000305" key="4"/>
<keyword id="KW-0175">Coiled coil</keyword>
<keyword id="KW-1015">Disulfide bond</keyword>
<keyword id="KW-0325">Glycoprotein</keyword>
<keyword id="KW-1185">Reference proteome</keyword>
<keyword id="KW-0964">Secreted</keyword>
<keyword id="KW-0732">Signal</keyword>
<reference key="1">
    <citation type="journal article" date="1999" name="J. Biol. Chem.">
        <title>Molecular cloning, expression, and characterization of angiopoietin-related protein. angiopoietin-related protein induces endothelial cell sprouting.</title>
        <authorList>
            <person name="Kim I."/>
            <person name="Moon S.-O."/>
            <person name="Koh K.N."/>
            <person name="Kim H."/>
            <person name="Uhm C.-S."/>
            <person name="Kwak H.J."/>
            <person name="Kim N.-G."/>
            <person name="Koh G.Y."/>
        </authorList>
    </citation>
    <scope>NUCLEOTIDE SEQUENCE [MRNA]</scope>
    <source>
        <tissue>Heart</tissue>
    </source>
</reference>
<reference key="2">
    <citation type="journal article" date="2005" name="Science">
        <title>The transcriptional landscape of the mammalian genome.</title>
        <authorList>
            <person name="Carninci P."/>
            <person name="Kasukawa T."/>
            <person name="Katayama S."/>
            <person name="Gough J."/>
            <person name="Frith M.C."/>
            <person name="Maeda N."/>
            <person name="Oyama R."/>
            <person name="Ravasi T."/>
            <person name="Lenhard B."/>
            <person name="Wells C."/>
            <person name="Kodzius R."/>
            <person name="Shimokawa K."/>
            <person name="Bajic V.B."/>
            <person name="Brenner S.E."/>
            <person name="Batalov S."/>
            <person name="Forrest A.R."/>
            <person name="Zavolan M."/>
            <person name="Davis M.J."/>
            <person name="Wilming L.G."/>
            <person name="Aidinis V."/>
            <person name="Allen J.E."/>
            <person name="Ambesi-Impiombato A."/>
            <person name="Apweiler R."/>
            <person name="Aturaliya R.N."/>
            <person name="Bailey T.L."/>
            <person name="Bansal M."/>
            <person name="Baxter L."/>
            <person name="Beisel K.W."/>
            <person name="Bersano T."/>
            <person name="Bono H."/>
            <person name="Chalk A.M."/>
            <person name="Chiu K.P."/>
            <person name="Choudhary V."/>
            <person name="Christoffels A."/>
            <person name="Clutterbuck D.R."/>
            <person name="Crowe M.L."/>
            <person name="Dalla E."/>
            <person name="Dalrymple B.P."/>
            <person name="de Bono B."/>
            <person name="Della Gatta G."/>
            <person name="di Bernardo D."/>
            <person name="Down T."/>
            <person name="Engstrom P."/>
            <person name="Fagiolini M."/>
            <person name="Faulkner G."/>
            <person name="Fletcher C.F."/>
            <person name="Fukushima T."/>
            <person name="Furuno M."/>
            <person name="Futaki S."/>
            <person name="Gariboldi M."/>
            <person name="Georgii-Hemming P."/>
            <person name="Gingeras T.R."/>
            <person name="Gojobori T."/>
            <person name="Green R.E."/>
            <person name="Gustincich S."/>
            <person name="Harbers M."/>
            <person name="Hayashi Y."/>
            <person name="Hensch T.K."/>
            <person name="Hirokawa N."/>
            <person name="Hill D."/>
            <person name="Huminiecki L."/>
            <person name="Iacono M."/>
            <person name="Ikeo K."/>
            <person name="Iwama A."/>
            <person name="Ishikawa T."/>
            <person name="Jakt M."/>
            <person name="Kanapin A."/>
            <person name="Katoh M."/>
            <person name="Kawasawa Y."/>
            <person name="Kelso J."/>
            <person name="Kitamura H."/>
            <person name="Kitano H."/>
            <person name="Kollias G."/>
            <person name="Krishnan S.P."/>
            <person name="Kruger A."/>
            <person name="Kummerfeld S.K."/>
            <person name="Kurochkin I.V."/>
            <person name="Lareau L.F."/>
            <person name="Lazarevic D."/>
            <person name="Lipovich L."/>
            <person name="Liu J."/>
            <person name="Liuni S."/>
            <person name="McWilliam S."/>
            <person name="Madan Babu M."/>
            <person name="Madera M."/>
            <person name="Marchionni L."/>
            <person name="Matsuda H."/>
            <person name="Matsuzawa S."/>
            <person name="Miki H."/>
            <person name="Mignone F."/>
            <person name="Miyake S."/>
            <person name="Morris K."/>
            <person name="Mottagui-Tabar S."/>
            <person name="Mulder N."/>
            <person name="Nakano N."/>
            <person name="Nakauchi H."/>
            <person name="Ng P."/>
            <person name="Nilsson R."/>
            <person name="Nishiguchi S."/>
            <person name="Nishikawa S."/>
            <person name="Nori F."/>
            <person name="Ohara O."/>
            <person name="Okazaki Y."/>
            <person name="Orlando V."/>
            <person name="Pang K.C."/>
            <person name="Pavan W.J."/>
            <person name="Pavesi G."/>
            <person name="Pesole G."/>
            <person name="Petrovsky N."/>
            <person name="Piazza S."/>
            <person name="Reed J."/>
            <person name="Reid J.F."/>
            <person name="Ring B.Z."/>
            <person name="Ringwald M."/>
            <person name="Rost B."/>
            <person name="Ruan Y."/>
            <person name="Salzberg S.L."/>
            <person name="Sandelin A."/>
            <person name="Schneider C."/>
            <person name="Schoenbach C."/>
            <person name="Sekiguchi K."/>
            <person name="Semple C.A."/>
            <person name="Seno S."/>
            <person name="Sessa L."/>
            <person name="Sheng Y."/>
            <person name="Shibata Y."/>
            <person name="Shimada H."/>
            <person name="Shimada K."/>
            <person name="Silva D."/>
            <person name="Sinclair B."/>
            <person name="Sperling S."/>
            <person name="Stupka E."/>
            <person name="Sugiura K."/>
            <person name="Sultana R."/>
            <person name="Takenaka Y."/>
            <person name="Taki K."/>
            <person name="Tammoja K."/>
            <person name="Tan S.L."/>
            <person name="Tang S."/>
            <person name="Taylor M.S."/>
            <person name="Tegner J."/>
            <person name="Teichmann S.A."/>
            <person name="Ueda H.R."/>
            <person name="van Nimwegen E."/>
            <person name="Verardo R."/>
            <person name="Wei C.L."/>
            <person name="Yagi K."/>
            <person name="Yamanishi H."/>
            <person name="Zabarovsky E."/>
            <person name="Zhu S."/>
            <person name="Zimmer A."/>
            <person name="Hide W."/>
            <person name="Bult C."/>
            <person name="Grimmond S.M."/>
            <person name="Teasdale R.D."/>
            <person name="Liu E.T."/>
            <person name="Brusic V."/>
            <person name="Quackenbush J."/>
            <person name="Wahlestedt C."/>
            <person name="Mattick J.S."/>
            <person name="Hume D.A."/>
            <person name="Kai C."/>
            <person name="Sasaki D."/>
            <person name="Tomaru Y."/>
            <person name="Fukuda S."/>
            <person name="Kanamori-Katayama M."/>
            <person name="Suzuki M."/>
            <person name="Aoki J."/>
            <person name="Arakawa T."/>
            <person name="Iida J."/>
            <person name="Imamura K."/>
            <person name="Itoh M."/>
            <person name="Kato T."/>
            <person name="Kawaji H."/>
            <person name="Kawagashira N."/>
            <person name="Kawashima T."/>
            <person name="Kojima M."/>
            <person name="Kondo S."/>
            <person name="Konno H."/>
            <person name="Nakano K."/>
            <person name="Ninomiya N."/>
            <person name="Nishio T."/>
            <person name="Okada M."/>
            <person name="Plessy C."/>
            <person name="Shibata K."/>
            <person name="Shiraki T."/>
            <person name="Suzuki S."/>
            <person name="Tagami M."/>
            <person name="Waki K."/>
            <person name="Watahiki A."/>
            <person name="Okamura-Oho Y."/>
            <person name="Suzuki H."/>
            <person name="Kawai J."/>
            <person name="Hayashizaki Y."/>
        </authorList>
    </citation>
    <scope>NUCLEOTIDE SEQUENCE [LARGE SCALE MRNA]</scope>
    <source>
        <strain>C57BL/6J</strain>
        <strain>NOD</strain>
        <tissue>Thymus</tissue>
    </source>
</reference>
<reference key="3">
    <citation type="journal article" date="2009" name="PLoS Biol.">
        <title>Lineage-specific biology revealed by a finished genome assembly of the mouse.</title>
        <authorList>
            <person name="Church D.M."/>
            <person name="Goodstadt L."/>
            <person name="Hillier L.W."/>
            <person name="Zody M.C."/>
            <person name="Goldstein S."/>
            <person name="She X."/>
            <person name="Bult C.J."/>
            <person name="Agarwala R."/>
            <person name="Cherry J.L."/>
            <person name="DiCuccio M."/>
            <person name="Hlavina W."/>
            <person name="Kapustin Y."/>
            <person name="Meric P."/>
            <person name="Maglott D."/>
            <person name="Birtle Z."/>
            <person name="Marques A.C."/>
            <person name="Graves T."/>
            <person name="Zhou S."/>
            <person name="Teague B."/>
            <person name="Potamousis K."/>
            <person name="Churas C."/>
            <person name="Place M."/>
            <person name="Herschleb J."/>
            <person name="Runnheim R."/>
            <person name="Forrest D."/>
            <person name="Amos-Landgraf J."/>
            <person name="Schwartz D.C."/>
            <person name="Cheng Z."/>
            <person name="Lindblad-Toh K."/>
            <person name="Eichler E.E."/>
            <person name="Ponting C.P."/>
        </authorList>
    </citation>
    <scope>NUCLEOTIDE SEQUENCE [LARGE SCALE GENOMIC DNA]</scope>
    <source>
        <strain>C57BL/6J</strain>
    </source>
</reference>
<reference key="4">
    <citation type="submission" date="2005-07" db="EMBL/GenBank/DDBJ databases">
        <authorList>
            <person name="Mural R.J."/>
            <person name="Adams M.D."/>
            <person name="Myers E.W."/>
            <person name="Smith H.O."/>
            <person name="Venter J.C."/>
        </authorList>
    </citation>
    <scope>NUCLEOTIDE SEQUENCE [LARGE SCALE GENOMIC DNA]</scope>
</reference>
<reference key="5">
    <citation type="journal article" date="2004" name="Genome Res.">
        <title>The status, quality, and expansion of the NIH full-length cDNA project: the Mammalian Gene Collection (MGC).</title>
        <authorList>
            <consortium name="The MGC Project Team"/>
        </authorList>
    </citation>
    <scope>NUCLEOTIDE SEQUENCE [LARGE SCALE MRNA]</scope>
    <source>
        <tissue>Brain</tissue>
    </source>
</reference>
<gene>
    <name type="primary">Angptl2</name>
    <name type="synonym">Arp2</name>
</gene>
<proteinExistence type="evidence at transcript level"/>
<name>ANGL2_MOUSE</name>
<dbReference type="EMBL" id="AF125176">
    <property type="protein sequence ID" value="AAD55358.1"/>
    <property type="molecule type" value="mRNA"/>
</dbReference>
<dbReference type="EMBL" id="AK037265">
    <property type="protein sequence ID" value="BAC29780.1"/>
    <property type="molecule type" value="mRNA"/>
</dbReference>
<dbReference type="EMBL" id="AK155464">
    <property type="protein sequence ID" value="BAE33276.1"/>
    <property type="molecule type" value="mRNA"/>
</dbReference>
<dbReference type="EMBL" id="AL845277">
    <property type="status" value="NOT_ANNOTATED_CDS"/>
    <property type="molecule type" value="Genomic_DNA"/>
</dbReference>
<dbReference type="EMBL" id="CH466542">
    <property type="protein sequence ID" value="EDL08597.1"/>
    <property type="molecule type" value="Genomic_DNA"/>
</dbReference>
<dbReference type="EMBL" id="BC138609">
    <property type="protein sequence ID" value="AAI38610.1"/>
    <property type="molecule type" value="mRNA"/>
</dbReference>
<dbReference type="EMBL" id="BC138610">
    <property type="protein sequence ID" value="AAI38611.1"/>
    <property type="molecule type" value="mRNA"/>
</dbReference>
<dbReference type="CCDS" id="CCDS15940.1"/>
<dbReference type="RefSeq" id="NP_036053.2">
    <property type="nucleotide sequence ID" value="NM_011923.4"/>
</dbReference>
<dbReference type="RefSeq" id="XP_006498114.1">
    <property type="nucleotide sequence ID" value="XM_006498051.1"/>
</dbReference>
<dbReference type="SMR" id="Q9R045"/>
<dbReference type="BioGRID" id="204920">
    <property type="interactions" value="3"/>
</dbReference>
<dbReference type="FunCoup" id="Q9R045">
    <property type="interactions" value="251"/>
</dbReference>
<dbReference type="STRING" id="10090.ENSMUSP00000004208"/>
<dbReference type="GlyCosmos" id="Q9R045">
    <property type="glycosylation" value="2 sites, No reported glycans"/>
</dbReference>
<dbReference type="GlyGen" id="Q9R045">
    <property type="glycosylation" value="2 sites, 1 N-linked glycan (2 sites)"/>
</dbReference>
<dbReference type="iPTMnet" id="Q9R045"/>
<dbReference type="PhosphoSitePlus" id="Q9R045"/>
<dbReference type="jPOST" id="Q9R045"/>
<dbReference type="PaxDb" id="10090-ENSMUSP00000004208"/>
<dbReference type="PeptideAtlas" id="Q9R045"/>
<dbReference type="ProteomicsDB" id="282104"/>
<dbReference type="Pumba" id="Q9R045"/>
<dbReference type="Antibodypedia" id="30639">
    <property type="antibodies" value="289 antibodies from 31 providers"/>
</dbReference>
<dbReference type="DNASU" id="26360"/>
<dbReference type="Ensembl" id="ENSMUST00000004208.7">
    <property type="protein sequence ID" value="ENSMUSP00000004208.6"/>
    <property type="gene ID" value="ENSMUSG00000004105.9"/>
</dbReference>
<dbReference type="GeneID" id="26360"/>
<dbReference type="KEGG" id="mmu:26360"/>
<dbReference type="UCSC" id="uc008jhq.1">
    <property type="organism name" value="mouse"/>
</dbReference>
<dbReference type="AGR" id="MGI:1347002"/>
<dbReference type="CTD" id="23452"/>
<dbReference type="MGI" id="MGI:1347002">
    <property type="gene designation" value="Angptl2"/>
</dbReference>
<dbReference type="VEuPathDB" id="HostDB:ENSMUSG00000004105"/>
<dbReference type="eggNOG" id="KOG2579">
    <property type="taxonomic scope" value="Eukaryota"/>
</dbReference>
<dbReference type="GeneTree" id="ENSGT00940000155946"/>
<dbReference type="HOGENOM" id="CLU_038628_0_0_1"/>
<dbReference type="InParanoid" id="Q9R045"/>
<dbReference type="OMA" id="CVTYWWL"/>
<dbReference type="OrthoDB" id="7735550at2759"/>
<dbReference type="PhylomeDB" id="Q9R045"/>
<dbReference type="TreeFam" id="TF336658"/>
<dbReference type="BioGRID-ORCS" id="26360">
    <property type="hits" value="2 hits in 78 CRISPR screens"/>
</dbReference>
<dbReference type="PRO" id="PR:Q9R045"/>
<dbReference type="Proteomes" id="UP000000589">
    <property type="component" value="Chromosome 2"/>
</dbReference>
<dbReference type="RNAct" id="Q9R045">
    <property type="molecule type" value="protein"/>
</dbReference>
<dbReference type="Bgee" id="ENSMUSG00000004105">
    <property type="expression patterns" value="Expressed in tarsal region and 233 other cell types or tissues"/>
</dbReference>
<dbReference type="ExpressionAtlas" id="Q9R045">
    <property type="expression patterns" value="baseline and differential"/>
</dbReference>
<dbReference type="GO" id="GO:0005615">
    <property type="term" value="C:extracellular space"/>
    <property type="evidence" value="ECO:0007005"/>
    <property type="project" value="BHF-UCL"/>
</dbReference>
<dbReference type="GO" id="GO:0007596">
    <property type="term" value="P:blood coagulation"/>
    <property type="evidence" value="ECO:0007669"/>
    <property type="project" value="InterPro"/>
</dbReference>
<dbReference type="CDD" id="cd00087">
    <property type="entry name" value="FReD"/>
    <property type="match status" value="1"/>
</dbReference>
<dbReference type="FunFam" id="3.90.215.10:FF:000001">
    <property type="entry name" value="Tenascin isoform 1"/>
    <property type="match status" value="1"/>
</dbReference>
<dbReference type="Gene3D" id="3.90.215.10">
    <property type="entry name" value="Gamma Fibrinogen, chain A, domain 1"/>
    <property type="match status" value="1"/>
</dbReference>
<dbReference type="InterPro" id="IPR037579">
    <property type="entry name" value="FIB_ANG-like"/>
</dbReference>
<dbReference type="InterPro" id="IPR036056">
    <property type="entry name" value="Fibrinogen-like_C"/>
</dbReference>
<dbReference type="InterPro" id="IPR014716">
    <property type="entry name" value="Fibrinogen_a/b/g_C_1"/>
</dbReference>
<dbReference type="InterPro" id="IPR002181">
    <property type="entry name" value="Fibrinogen_a/b/g_C_dom"/>
</dbReference>
<dbReference type="InterPro" id="IPR020837">
    <property type="entry name" value="Fibrinogen_CS"/>
</dbReference>
<dbReference type="NCBIfam" id="NF040941">
    <property type="entry name" value="GGGWT_bact"/>
    <property type="match status" value="1"/>
</dbReference>
<dbReference type="PANTHER" id="PTHR47221">
    <property type="entry name" value="FIBRINOGEN ALPHA CHAIN"/>
    <property type="match status" value="1"/>
</dbReference>
<dbReference type="PANTHER" id="PTHR47221:SF6">
    <property type="entry name" value="FIBRINOGEN ALPHA CHAIN"/>
    <property type="match status" value="1"/>
</dbReference>
<dbReference type="Pfam" id="PF00147">
    <property type="entry name" value="Fibrinogen_C"/>
    <property type="match status" value="1"/>
</dbReference>
<dbReference type="SMART" id="SM00186">
    <property type="entry name" value="FBG"/>
    <property type="match status" value="1"/>
</dbReference>
<dbReference type="SUPFAM" id="SSF56496">
    <property type="entry name" value="Fibrinogen C-terminal domain-like"/>
    <property type="match status" value="1"/>
</dbReference>
<dbReference type="PROSITE" id="PS00514">
    <property type="entry name" value="FIBRINOGEN_C_1"/>
    <property type="match status" value="1"/>
</dbReference>
<dbReference type="PROSITE" id="PS51406">
    <property type="entry name" value="FIBRINOGEN_C_2"/>
    <property type="match status" value="1"/>
</dbReference>
<organism>
    <name type="scientific">Mus musculus</name>
    <name type="common">Mouse</name>
    <dbReference type="NCBI Taxonomy" id="10090"/>
    <lineage>
        <taxon>Eukaryota</taxon>
        <taxon>Metazoa</taxon>
        <taxon>Chordata</taxon>
        <taxon>Craniata</taxon>
        <taxon>Vertebrata</taxon>
        <taxon>Euteleostomi</taxon>
        <taxon>Mammalia</taxon>
        <taxon>Eutheria</taxon>
        <taxon>Euarchontoglires</taxon>
        <taxon>Glires</taxon>
        <taxon>Rodentia</taxon>
        <taxon>Myomorpha</taxon>
        <taxon>Muroidea</taxon>
        <taxon>Muridae</taxon>
        <taxon>Murinae</taxon>
        <taxon>Mus</taxon>
        <taxon>Mus</taxon>
    </lineage>
</organism>
<feature type="signal peptide" evidence="2">
    <location>
        <begin position="1"/>
        <end position="19"/>
    </location>
</feature>
<feature type="chain" id="PRO_0000009121" description="Angiopoietin-related protein 2">
    <location>
        <begin position="20"/>
        <end position="493"/>
    </location>
</feature>
<feature type="domain" description="Fibrinogen C-terminal" evidence="3">
    <location>
        <begin position="269"/>
        <end position="489"/>
    </location>
</feature>
<feature type="coiled-coil region" evidence="2">
    <location>
        <begin position="77"/>
        <end position="115"/>
    </location>
</feature>
<feature type="coiled-coil region" evidence="2">
    <location>
        <begin position="152"/>
        <end position="202"/>
    </location>
</feature>
<feature type="glycosylation site" description="N-linked (GlcNAc...) asparagine" evidence="2">
    <location>
        <position position="164"/>
    </location>
</feature>
<feature type="glycosylation site" description="N-linked (GlcNAc...) asparagine" evidence="2">
    <location>
        <position position="192"/>
    </location>
</feature>
<feature type="disulfide bond" evidence="3">
    <location>
        <begin position="278"/>
        <end position="307"/>
    </location>
</feature>
<feature type="disulfide bond" evidence="3">
    <location>
        <begin position="430"/>
        <end position="443"/>
    </location>
</feature>
<feature type="sequence conflict" description="In Ref. 1; AAD55358." evidence="4" ref="1">
    <original>NT</original>
    <variation>DI</variation>
    <location>
        <begin position="490"/>
        <end position="491"/>
    </location>
</feature>
<comment type="function">
    <text evidence="1">Induces sprouting in endothelial cells through an autocrine and paracrine action.</text>
</comment>
<comment type="subcellular location">
    <subcellularLocation>
        <location evidence="1">Secreted</location>
    </subcellularLocation>
</comment>
<comment type="tissue specificity">
    <text>Widely expressed in heart, tongue, lung and skeletal muscle. Also found in lower levels in kidney, epididymis and testis.</text>
</comment>
<sequence length="493" mass="57105">MRPLCMTYWWLGLLATVGAATGPEADVEGTEDGSQREYIYLNRYKRAGESPDKCTYTFIVPQQRVTGAICVNSKEPEVHLENRVHKQELELLNNELLKQKRQIETLQQLVEVDGGIVSEVKLLRKESRNMNSRVTQLYMQLLHEIIRKRDNALELSQLENRILNQTADMLQLASKYKDLEHKFQHLAMLAHNQSEVIAQLEEHCQRVPAARPMPQPPPAAPPRVYQPPTYNRIINQISTNEIQSDQNLKVLPPSLPTMPALTSLPSSTDKPSGPWRDCLQALEDGHSTSSIYLVKPENTNRLMQVWCDQRHDPGGWTVIQRRLDGSVNFFRNWETYKQGFGNIDGEYWLGLENIYWLTNQGNYKLLVTMEDWSGRKVFAEYASFRLEPESEYYKLRLGRYHGNAGDSFTWHNGKQFTTLDRDHDVYTGNCAHYQKGGWWYNACAHSNLNGVWYRGGHYRSRYQDGVYWAEFRGGSYSLKKVVMMIRPNPNTFH</sequence>
<protein>
    <recommendedName>
        <fullName>Angiopoietin-related protein 2</fullName>
    </recommendedName>
    <alternativeName>
        <fullName>Angiopoietin-like protein 2</fullName>
    </alternativeName>
</protein>
<accession>Q9R045</accession>
<accession>Q8BM09</accession>